<name>RL23_PARP8</name>
<organism>
    <name type="scientific">Paraburkholderia phymatum (strain DSM 17167 / CIP 108236 / LMG 21445 / STM815)</name>
    <name type="common">Burkholderia phymatum</name>
    <dbReference type="NCBI Taxonomy" id="391038"/>
    <lineage>
        <taxon>Bacteria</taxon>
        <taxon>Pseudomonadati</taxon>
        <taxon>Pseudomonadota</taxon>
        <taxon>Betaproteobacteria</taxon>
        <taxon>Burkholderiales</taxon>
        <taxon>Burkholderiaceae</taxon>
        <taxon>Paraburkholderia</taxon>
    </lineage>
</organism>
<reference key="1">
    <citation type="journal article" date="2014" name="Stand. Genomic Sci.">
        <title>Complete genome sequence of Burkholderia phymatum STM815(T), a broad host range and efficient nitrogen-fixing symbiont of Mimosa species.</title>
        <authorList>
            <person name="Moulin L."/>
            <person name="Klonowska A."/>
            <person name="Caroline B."/>
            <person name="Booth K."/>
            <person name="Vriezen J.A."/>
            <person name="Melkonian R."/>
            <person name="James E.K."/>
            <person name="Young J.P."/>
            <person name="Bena G."/>
            <person name="Hauser L."/>
            <person name="Land M."/>
            <person name="Kyrpides N."/>
            <person name="Bruce D."/>
            <person name="Chain P."/>
            <person name="Copeland A."/>
            <person name="Pitluck S."/>
            <person name="Woyke T."/>
            <person name="Lizotte-Waniewski M."/>
            <person name="Bristow J."/>
            <person name="Riley M."/>
        </authorList>
    </citation>
    <scope>NUCLEOTIDE SEQUENCE [LARGE SCALE GENOMIC DNA]</scope>
    <source>
        <strain>DSM 17167 / CIP 108236 / LMG 21445 / STM815</strain>
    </source>
</reference>
<dbReference type="EMBL" id="CP001043">
    <property type="protein sequence ID" value="ACC72010.1"/>
    <property type="molecule type" value="Genomic_DNA"/>
</dbReference>
<dbReference type="RefSeq" id="WP_012402195.1">
    <property type="nucleotide sequence ID" value="NC_010622.1"/>
</dbReference>
<dbReference type="SMR" id="B2JIG4"/>
<dbReference type="STRING" id="391038.Bphy_2838"/>
<dbReference type="KEGG" id="bph:Bphy_2838"/>
<dbReference type="eggNOG" id="COG0089">
    <property type="taxonomic scope" value="Bacteria"/>
</dbReference>
<dbReference type="HOGENOM" id="CLU_037562_3_1_4"/>
<dbReference type="OrthoDB" id="9793353at2"/>
<dbReference type="Proteomes" id="UP000001192">
    <property type="component" value="Chromosome 1"/>
</dbReference>
<dbReference type="GO" id="GO:1990904">
    <property type="term" value="C:ribonucleoprotein complex"/>
    <property type="evidence" value="ECO:0007669"/>
    <property type="project" value="UniProtKB-KW"/>
</dbReference>
<dbReference type="GO" id="GO:0005840">
    <property type="term" value="C:ribosome"/>
    <property type="evidence" value="ECO:0007669"/>
    <property type="project" value="UniProtKB-KW"/>
</dbReference>
<dbReference type="GO" id="GO:0019843">
    <property type="term" value="F:rRNA binding"/>
    <property type="evidence" value="ECO:0007669"/>
    <property type="project" value="UniProtKB-UniRule"/>
</dbReference>
<dbReference type="GO" id="GO:0003735">
    <property type="term" value="F:structural constituent of ribosome"/>
    <property type="evidence" value="ECO:0007669"/>
    <property type="project" value="InterPro"/>
</dbReference>
<dbReference type="GO" id="GO:0006412">
    <property type="term" value="P:translation"/>
    <property type="evidence" value="ECO:0007669"/>
    <property type="project" value="UniProtKB-UniRule"/>
</dbReference>
<dbReference type="FunFam" id="3.30.70.330:FF:000001">
    <property type="entry name" value="50S ribosomal protein L23"/>
    <property type="match status" value="1"/>
</dbReference>
<dbReference type="Gene3D" id="3.30.70.330">
    <property type="match status" value="1"/>
</dbReference>
<dbReference type="HAMAP" id="MF_01369_B">
    <property type="entry name" value="Ribosomal_uL23_B"/>
    <property type="match status" value="1"/>
</dbReference>
<dbReference type="InterPro" id="IPR012677">
    <property type="entry name" value="Nucleotide-bd_a/b_plait_sf"/>
</dbReference>
<dbReference type="InterPro" id="IPR013025">
    <property type="entry name" value="Ribosomal_uL23-like"/>
</dbReference>
<dbReference type="InterPro" id="IPR012678">
    <property type="entry name" value="Ribosomal_uL23/eL15/eS24_sf"/>
</dbReference>
<dbReference type="NCBIfam" id="NF004359">
    <property type="entry name" value="PRK05738.1-3"/>
    <property type="match status" value="1"/>
</dbReference>
<dbReference type="NCBIfam" id="NF004363">
    <property type="entry name" value="PRK05738.2-4"/>
    <property type="match status" value="1"/>
</dbReference>
<dbReference type="PANTHER" id="PTHR11620">
    <property type="entry name" value="60S RIBOSOMAL PROTEIN L23A"/>
    <property type="match status" value="1"/>
</dbReference>
<dbReference type="Pfam" id="PF00276">
    <property type="entry name" value="Ribosomal_L23"/>
    <property type="match status" value="1"/>
</dbReference>
<dbReference type="SUPFAM" id="SSF54189">
    <property type="entry name" value="Ribosomal proteins S24e, L23 and L15e"/>
    <property type="match status" value="1"/>
</dbReference>
<keyword id="KW-1185">Reference proteome</keyword>
<keyword id="KW-0687">Ribonucleoprotein</keyword>
<keyword id="KW-0689">Ribosomal protein</keyword>
<keyword id="KW-0694">RNA-binding</keyword>
<keyword id="KW-0699">rRNA-binding</keyword>
<evidence type="ECO:0000255" key="1">
    <source>
        <dbReference type="HAMAP-Rule" id="MF_01369"/>
    </source>
</evidence>
<evidence type="ECO:0000305" key="2"/>
<sequence length="104" mass="11714">MSEVRKNDHRLMQVLLAPVISEKATLVAEKNEQVVFEVAPDATKQEVKAAVELLFKVEVNSVNVLVQKGKAKRFGRFMGKRKDVKKAYVCLKPGQEINFEAEAK</sequence>
<feature type="chain" id="PRO_1000144542" description="Large ribosomal subunit protein uL23">
    <location>
        <begin position="1"/>
        <end position="104"/>
    </location>
</feature>
<comment type="function">
    <text evidence="1">One of the early assembly proteins it binds 23S rRNA. One of the proteins that surrounds the polypeptide exit tunnel on the outside of the ribosome. Forms the main docking site for trigger factor binding to the ribosome.</text>
</comment>
<comment type="subunit">
    <text evidence="1">Part of the 50S ribosomal subunit. Contacts protein L29, and trigger factor when it is bound to the ribosome.</text>
</comment>
<comment type="similarity">
    <text evidence="1">Belongs to the universal ribosomal protein uL23 family.</text>
</comment>
<protein>
    <recommendedName>
        <fullName evidence="1">Large ribosomal subunit protein uL23</fullName>
    </recommendedName>
    <alternativeName>
        <fullName evidence="2">50S ribosomal protein L23</fullName>
    </alternativeName>
</protein>
<accession>B2JIG4</accession>
<proteinExistence type="inferred from homology"/>
<gene>
    <name evidence="1" type="primary">rplW</name>
    <name type="ordered locus">Bphy_2838</name>
</gene>